<evidence type="ECO:0000250" key="1"/>
<evidence type="ECO:0000255" key="2">
    <source>
        <dbReference type="PROSITE-ProRule" id="PRU00194"/>
    </source>
</evidence>
<evidence type="ECO:0000269" key="3">
    <source>
    </source>
</evidence>
<evidence type="ECO:0000305" key="4"/>
<feature type="chain" id="PRO_0000066959" description="Ankyrin repeat and SOCS box protein 17">
    <location>
        <begin position="1"/>
        <end position="295"/>
    </location>
</feature>
<feature type="repeat" description="ANK">
    <location>
        <begin position="146"/>
        <end position="176"/>
    </location>
</feature>
<feature type="domain" description="SOCS box" evidence="2">
    <location>
        <begin position="232"/>
        <end position="295"/>
    </location>
</feature>
<feature type="sequence variant" id="VAR_024174" description="In dbSNP:rs3795251.">
    <original>S</original>
    <variation>N</variation>
    <location>
        <position position="2"/>
    </location>
</feature>
<feature type="sequence variant" id="VAR_048288" description="In dbSNP:rs1796814.">
    <original>V</original>
    <variation>A</variation>
    <location>
        <position position="101"/>
    </location>
</feature>
<dbReference type="EMBL" id="AK098606">
    <property type="protein sequence ID" value="BAC05350.1"/>
    <property type="molecule type" value="mRNA"/>
</dbReference>
<dbReference type="EMBL" id="AF429968">
    <property type="protein sequence ID" value="AAN85310.1"/>
    <property type="molecule type" value="mRNA"/>
</dbReference>
<dbReference type="EMBL" id="AC092813">
    <property type="status" value="NOT_ANNOTATED_CDS"/>
    <property type="molecule type" value="Genomic_DNA"/>
</dbReference>
<dbReference type="EMBL" id="AL445464">
    <property type="status" value="NOT_ANNOTATED_CDS"/>
    <property type="molecule type" value="Genomic_DNA"/>
</dbReference>
<dbReference type="EMBL" id="CH471059">
    <property type="protein sequence ID" value="EAX06391.1"/>
    <property type="molecule type" value="Genomic_DNA"/>
</dbReference>
<dbReference type="EMBL" id="BC036573">
    <property type="protein sequence ID" value="AAH36573.1"/>
    <property type="molecule type" value="mRNA"/>
</dbReference>
<dbReference type="EMBL" id="AF403035">
    <property type="protein sequence ID" value="AAL57354.1"/>
    <property type="molecule type" value="mRNA"/>
</dbReference>
<dbReference type="CCDS" id="CCDS671.1"/>
<dbReference type="RefSeq" id="NP_543144.1">
    <property type="nucleotide sequence ID" value="NM_080868.3"/>
</dbReference>
<dbReference type="BioGRID" id="126044">
    <property type="interactions" value="25"/>
</dbReference>
<dbReference type="FunCoup" id="Q8WXJ9">
    <property type="interactions" value="13"/>
</dbReference>
<dbReference type="IntAct" id="Q8WXJ9">
    <property type="interactions" value="1"/>
</dbReference>
<dbReference type="STRING" id="9606.ENSP00000284142"/>
<dbReference type="GlyGen" id="Q8WXJ9">
    <property type="glycosylation" value="1 site, 1 O-linked glycan (1 site)"/>
</dbReference>
<dbReference type="iPTMnet" id="Q8WXJ9"/>
<dbReference type="PhosphoSitePlus" id="Q8WXJ9"/>
<dbReference type="BioMuta" id="ASB17"/>
<dbReference type="DMDM" id="38372883"/>
<dbReference type="jPOST" id="Q8WXJ9"/>
<dbReference type="MassIVE" id="Q8WXJ9"/>
<dbReference type="PaxDb" id="9606-ENSP00000284142"/>
<dbReference type="PeptideAtlas" id="Q8WXJ9"/>
<dbReference type="ProteomicsDB" id="75071"/>
<dbReference type="Antibodypedia" id="46911">
    <property type="antibodies" value="147 antibodies from 23 providers"/>
</dbReference>
<dbReference type="DNASU" id="127247"/>
<dbReference type="Ensembl" id="ENST00000284142.7">
    <property type="protein sequence ID" value="ENSP00000284142.6"/>
    <property type="gene ID" value="ENSG00000154007.7"/>
</dbReference>
<dbReference type="GeneID" id="127247"/>
<dbReference type="KEGG" id="hsa:127247"/>
<dbReference type="MANE-Select" id="ENST00000284142.7">
    <property type="protein sequence ID" value="ENSP00000284142.6"/>
    <property type="RefSeq nucleotide sequence ID" value="NM_080868.3"/>
    <property type="RefSeq protein sequence ID" value="NP_543144.1"/>
</dbReference>
<dbReference type="UCSC" id="uc001dhe.2">
    <property type="organism name" value="human"/>
</dbReference>
<dbReference type="AGR" id="HGNC:19769"/>
<dbReference type="CTD" id="127247"/>
<dbReference type="GeneCards" id="ASB17"/>
<dbReference type="HGNC" id="HGNC:19769">
    <property type="gene designation" value="ASB17"/>
</dbReference>
<dbReference type="HPA" id="ENSG00000154007">
    <property type="expression patterns" value="Tissue enriched (testis)"/>
</dbReference>
<dbReference type="MIM" id="619936">
    <property type="type" value="gene"/>
</dbReference>
<dbReference type="neXtProt" id="NX_Q8WXJ9"/>
<dbReference type="OpenTargets" id="ENSG00000154007"/>
<dbReference type="PharmGKB" id="PA134958560"/>
<dbReference type="VEuPathDB" id="HostDB:ENSG00000154007"/>
<dbReference type="eggNOG" id="ENOG502QVW2">
    <property type="taxonomic scope" value="Eukaryota"/>
</dbReference>
<dbReference type="GeneTree" id="ENSGT00390000018077"/>
<dbReference type="HOGENOM" id="CLU_082443_0_0_1"/>
<dbReference type="InParanoid" id="Q8WXJ9"/>
<dbReference type="OMA" id="KLCHKTS"/>
<dbReference type="OrthoDB" id="6419934at2759"/>
<dbReference type="PAN-GO" id="Q8WXJ9">
    <property type="GO annotations" value="0 GO annotations based on evolutionary models"/>
</dbReference>
<dbReference type="PhylomeDB" id="Q8WXJ9"/>
<dbReference type="TreeFam" id="TF337448"/>
<dbReference type="PathwayCommons" id="Q8WXJ9"/>
<dbReference type="Reactome" id="R-HSA-8951664">
    <property type="pathway name" value="Neddylation"/>
</dbReference>
<dbReference type="Reactome" id="R-HSA-983168">
    <property type="pathway name" value="Antigen processing: Ubiquitination &amp; Proteasome degradation"/>
</dbReference>
<dbReference type="SignaLink" id="Q8WXJ9"/>
<dbReference type="UniPathway" id="UPA00143"/>
<dbReference type="BioGRID-ORCS" id="127247">
    <property type="hits" value="15 hits in 1177 CRISPR screens"/>
</dbReference>
<dbReference type="ChiTaRS" id="ASB17">
    <property type="organism name" value="human"/>
</dbReference>
<dbReference type="GenomeRNAi" id="127247"/>
<dbReference type="Pharos" id="Q8WXJ9">
    <property type="development level" value="Tbio"/>
</dbReference>
<dbReference type="PRO" id="PR:Q8WXJ9"/>
<dbReference type="Proteomes" id="UP000005640">
    <property type="component" value="Chromosome 1"/>
</dbReference>
<dbReference type="RNAct" id="Q8WXJ9">
    <property type="molecule type" value="protein"/>
</dbReference>
<dbReference type="Bgee" id="ENSG00000154007">
    <property type="expression patterns" value="Expressed in sperm and 27 other cell types or tissues"/>
</dbReference>
<dbReference type="GO" id="GO:0005829">
    <property type="term" value="C:cytosol"/>
    <property type="evidence" value="ECO:0000304"/>
    <property type="project" value="Reactome"/>
</dbReference>
<dbReference type="GO" id="GO:0035556">
    <property type="term" value="P:intracellular signal transduction"/>
    <property type="evidence" value="ECO:0007669"/>
    <property type="project" value="InterPro"/>
</dbReference>
<dbReference type="GO" id="GO:0016567">
    <property type="term" value="P:protein ubiquitination"/>
    <property type="evidence" value="ECO:0007669"/>
    <property type="project" value="UniProtKB-UniPathway"/>
</dbReference>
<dbReference type="CDD" id="cd03716">
    <property type="entry name" value="SOCS_ASB_like"/>
    <property type="match status" value="1"/>
</dbReference>
<dbReference type="Gene3D" id="1.25.40.20">
    <property type="entry name" value="Ankyrin repeat-containing domain"/>
    <property type="match status" value="1"/>
</dbReference>
<dbReference type="InterPro" id="IPR036770">
    <property type="entry name" value="Ankyrin_rpt-contain_sf"/>
</dbReference>
<dbReference type="InterPro" id="IPR039147">
    <property type="entry name" value="ASB17"/>
</dbReference>
<dbReference type="InterPro" id="IPR001496">
    <property type="entry name" value="SOCS_box"/>
</dbReference>
<dbReference type="InterPro" id="IPR036036">
    <property type="entry name" value="SOCS_box-like_dom_sf"/>
</dbReference>
<dbReference type="PANTHER" id="PTHR20966">
    <property type="entry name" value="ANKYRIN REPEAT AND SOCS BOX PROTEIN 17"/>
    <property type="match status" value="1"/>
</dbReference>
<dbReference type="PANTHER" id="PTHR20966:SF2">
    <property type="entry name" value="ANKYRIN REPEAT AND SOCS BOX PROTEIN 17"/>
    <property type="match status" value="1"/>
</dbReference>
<dbReference type="Pfam" id="PF07525">
    <property type="entry name" value="SOCS_box"/>
    <property type="match status" value="1"/>
</dbReference>
<dbReference type="SMART" id="SM00969">
    <property type="entry name" value="SOCS_box"/>
    <property type="match status" value="1"/>
</dbReference>
<dbReference type="SUPFAM" id="SSF48403">
    <property type="entry name" value="Ankyrin repeat"/>
    <property type="match status" value="1"/>
</dbReference>
<dbReference type="SUPFAM" id="SSF158235">
    <property type="entry name" value="SOCS box-like"/>
    <property type="match status" value="1"/>
</dbReference>
<dbReference type="PROSITE" id="PS50225">
    <property type="entry name" value="SOCS"/>
    <property type="match status" value="1"/>
</dbReference>
<proteinExistence type="evidence at protein level"/>
<organism>
    <name type="scientific">Homo sapiens</name>
    <name type="common">Human</name>
    <dbReference type="NCBI Taxonomy" id="9606"/>
    <lineage>
        <taxon>Eukaryota</taxon>
        <taxon>Metazoa</taxon>
        <taxon>Chordata</taxon>
        <taxon>Craniata</taxon>
        <taxon>Vertebrata</taxon>
        <taxon>Euteleostomi</taxon>
        <taxon>Mammalia</taxon>
        <taxon>Eutheria</taxon>
        <taxon>Euarchontoglires</taxon>
        <taxon>Primates</taxon>
        <taxon>Haplorrhini</taxon>
        <taxon>Catarrhini</taxon>
        <taxon>Hominidae</taxon>
        <taxon>Homo</taxon>
    </lineage>
</organism>
<reference key="1">
    <citation type="journal article" date="2004" name="Arch. Androl.">
        <title>Expression of testis specific ankyrin repeat and SOCS box-containing 17 gene.</title>
        <authorList>
            <person name="Guo J.H."/>
            <person name="Saiyin H."/>
            <person name="Wei Y.H."/>
            <person name="Chen S."/>
            <person name="Chen L."/>
            <person name="Bi G."/>
            <person name="Ma L.J."/>
            <person name="Zhou G.J."/>
            <person name="Huang C.Q."/>
            <person name="Yu L."/>
            <person name="Dai L."/>
        </authorList>
    </citation>
    <scope>NUCLEOTIDE SEQUENCE [MRNA]</scope>
    <scope>TISSUE SPECIFICITY</scope>
</reference>
<reference key="2">
    <citation type="journal article" date="2004" name="Nat. Genet.">
        <title>Complete sequencing and characterization of 21,243 full-length human cDNAs.</title>
        <authorList>
            <person name="Ota T."/>
            <person name="Suzuki Y."/>
            <person name="Nishikawa T."/>
            <person name="Otsuki T."/>
            <person name="Sugiyama T."/>
            <person name="Irie R."/>
            <person name="Wakamatsu A."/>
            <person name="Hayashi K."/>
            <person name="Sato H."/>
            <person name="Nagai K."/>
            <person name="Kimura K."/>
            <person name="Makita H."/>
            <person name="Sekine M."/>
            <person name="Obayashi M."/>
            <person name="Nishi T."/>
            <person name="Shibahara T."/>
            <person name="Tanaka T."/>
            <person name="Ishii S."/>
            <person name="Yamamoto J."/>
            <person name="Saito K."/>
            <person name="Kawai Y."/>
            <person name="Isono Y."/>
            <person name="Nakamura Y."/>
            <person name="Nagahari K."/>
            <person name="Murakami K."/>
            <person name="Yasuda T."/>
            <person name="Iwayanagi T."/>
            <person name="Wagatsuma M."/>
            <person name="Shiratori A."/>
            <person name="Sudo H."/>
            <person name="Hosoiri T."/>
            <person name="Kaku Y."/>
            <person name="Kodaira H."/>
            <person name="Kondo H."/>
            <person name="Sugawara M."/>
            <person name="Takahashi M."/>
            <person name="Kanda K."/>
            <person name="Yokoi T."/>
            <person name="Furuya T."/>
            <person name="Kikkawa E."/>
            <person name="Omura Y."/>
            <person name="Abe K."/>
            <person name="Kamihara K."/>
            <person name="Katsuta N."/>
            <person name="Sato K."/>
            <person name="Tanikawa M."/>
            <person name="Yamazaki M."/>
            <person name="Ninomiya K."/>
            <person name="Ishibashi T."/>
            <person name="Yamashita H."/>
            <person name="Murakawa K."/>
            <person name="Fujimori K."/>
            <person name="Tanai H."/>
            <person name="Kimata M."/>
            <person name="Watanabe M."/>
            <person name="Hiraoka S."/>
            <person name="Chiba Y."/>
            <person name="Ishida S."/>
            <person name="Ono Y."/>
            <person name="Takiguchi S."/>
            <person name="Watanabe S."/>
            <person name="Yosida M."/>
            <person name="Hotuta T."/>
            <person name="Kusano J."/>
            <person name="Kanehori K."/>
            <person name="Takahashi-Fujii A."/>
            <person name="Hara H."/>
            <person name="Tanase T.-O."/>
            <person name="Nomura Y."/>
            <person name="Togiya S."/>
            <person name="Komai F."/>
            <person name="Hara R."/>
            <person name="Takeuchi K."/>
            <person name="Arita M."/>
            <person name="Imose N."/>
            <person name="Musashino K."/>
            <person name="Yuuki H."/>
            <person name="Oshima A."/>
            <person name="Sasaki N."/>
            <person name="Aotsuka S."/>
            <person name="Yoshikawa Y."/>
            <person name="Matsunawa H."/>
            <person name="Ichihara T."/>
            <person name="Shiohata N."/>
            <person name="Sano S."/>
            <person name="Moriya S."/>
            <person name="Momiyama H."/>
            <person name="Satoh N."/>
            <person name="Takami S."/>
            <person name="Terashima Y."/>
            <person name="Suzuki O."/>
            <person name="Nakagawa S."/>
            <person name="Senoh A."/>
            <person name="Mizoguchi H."/>
            <person name="Goto Y."/>
            <person name="Shimizu F."/>
            <person name="Wakebe H."/>
            <person name="Hishigaki H."/>
            <person name="Watanabe T."/>
            <person name="Sugiyama A."/>
            <person name="Takemoto M."/>
            <person name="Kawakami B."/>
            <person name="Yamazaki M."/>
            <person name="Watanabe K."/>
            <person name="Kumagai A."/>
            <person name="Itakura S."/>
            <person name="Fukuzumi Y."/>
            <person name="Fujimori Y."/>
            <person name="Komiyama M."/>
            <person name="Tashiro H."/>
            <person name="Tanigami A."/>
            <person name="Fujiwara T."/>
            <person name="Ono T."/>
            <person name="Yamada K."/>
            <person name="Fujii Y."/>
            <person name="Ozaki K."/>
            <person name="Hirao M."/>
            <person name="Ohmori Y."/>
            <person name="Kawabata A."/>
            <person name="Hikiji T."/>
            <person name="Kobatake N."/>
            <person name="Inagaki H."/>
            <person name="Ikema Y."/>
            <person name="Okamoto S."/>
            <person name="Okitani R."/>
            <person name="Kawakami T."/>
            <person name="Noguchi S."/>
            <person name="Itoh T."/>
            <person name="Shigeta K."/>
            <person name="Senba T."/>
            <person name="Matsumura K."/>
            <person name="Nakajima Y."/>
            <person name="Mizuno T."/>
            <person name="Morinaga M."/>
            <person name="Sasaki M."/>
            <person name="Togashi T."/>
            <person name="Oyama M."/>
            <person name="Hata H."/>
            <person name="Watanabe M."/>
            <person name="Komatsu T."/>
            <person name="Mizushima-Sugano J."/>
            <person name="Satoh T."/>
            <person name="Shirai Y."/>
            <person name="Takahashi Y."/>
            <person name="Nakagawa K."/>
            <person name="Okumura K."/>
            <person name="Nagase T."/>
            <person name="Nomura N."/>
            <person name="Kikuchi H."/>
            <person name="Masuho Y."/>
            <person name="Yamashita R."/>
            <person name="Nakai K."/>
            <person name="Yada T."/>
            <person name="Nakamura Y."/>
            <person name="Ohara O."/>
            <person name="Isogai T."/>
            <person name="Sugano S."/>
        </authorList>
    </citation>
    <scope>NUCLEOTIDE SEQUENCE [LARGE SCALE MRNA]</scope>
    <source>
        <tissue>Testis</tissue>
    </source>
</reference>
<reference key="3">
    <citation type="journal article" date="2006" name="Nature">
        <title>The DNA sequence and biological annotation of human chromosome 1.</title>
        <authorList>
            <person name="Gregory S.G."/>
            <person name="Barlow K.F."/>
            <person name="McLay K.E."/>
            <person name="Kaul R."/>
            <person name="Swarbreck D."/>
            <person name="Dunham A."/>
            <person name="Scott C.E."/>
            <person name="Howe K.L."/>
            <person name="Woodfine K."/>
            <person name="Spencer C.C.A."/>
            <person name="Jones M.C."/>
            <person name="Gillson C."/>
            <person name="Searle S."/>
            <person name="Zhou Y."/>
            <person name="Kokocinski F."/>
            <person name="McDonald L."/>
            <person name="Evans R."/>
            <person name="Phillips K."/>
            <person name="Atkinson A."/>
            <person name="Cooper R."/>
            <person name="Jones C."/>
            <person name="Hall R.E."/>
            <person name="Andrews T.D."/>
            <person name="Lloyd C."/>
            <person name="Ainscough R."/>
            <person name="Almeida J.P."/>
            <person name="Ambrose K.D."/>
            <person name="Anderson F."/>
            <person name="Andrew R.W."/>
            <person name="Ashwell R.I.S."/>
            <person name="Aubin K."/>
            <person name="Babbage A.K."/>
            <person name="Bagguley C.L."/>
            <person name="Bailey J."/>
            <person name="Beasley H."/>
            <person name="Bethel G."/>
            <person name="Bird C.P."/>
            <person name="Bray-Allen S."/>
            <person name="Brown J.Y."/>
            <person name="Brown A.J."/>
            <person name="Buckley D."/>
            <person name="Burton J."/>
            <person name="Bye J."/>
            <person name="Carder C."/>
            <person name="Chapman J.C."/>
            <person name="Clark S.Y."/>
            <person name="Clarke G."/>
            <person name="Clee C."/>
            <person name="Cobley V."/>
            <person name="Collier R.E."/>
            <person name="Corby N."/>
            <person name="Coville G.J."/>
            <person name="Davies J."/>
            <person name="Deadman R."/>
            <person name="Dunn M."/>
            <person name="Earthrowl M."/>
            <person name="Ellington A.G."/>
            <person name="Errington H."/>
            <person name="Frankish A."/>
            <person name="Frankland J."/>
            <person name="French L."/>
            <person name="Garner P."/>
            <person name="Garnett J."/>
            <person name="Gay L."/>
            <person name="Ghori M.R.J."/>
            <person name="Gibson R."/>
            <person name="Gilby L.M."/>
            <person name="Gillett W."/>
            <person name="Glithero R.J."/>
            <person name="Grafham D.V."/>
            <person name="Griffiths C."/>
            <person name="Griffiths-Jones S."/>
            <person name="Grocock R."/>
            <person name="Hammond S."/>
            <person name="Harrison E.S.I."/>
            <person name="Hart E."/>
            <person name="Haugen E."/>
            <person name="Heath P.D."/>
            <person name="Holmes S."/>
            <person name="Holt K."/>
            <person name="Howden P.J."/>
            <person name="Hunt A.R."/>
            <person name="Hunt S.E."/>
            <person name="Hunter G."/>
            <person name="Isherwood J."/>
            <person name="James R."/>
            <person name="Johnson C."/>
            <person name="Johnson D."/>
            <person name="Joy A."/>
            <person name="Kay M."/>
            <person name="Kershaw J.K."/>
            <person name="Kibukawa M."/>
            <person name="Kimberley A.M."/>
            <person name="King A."/>
            <person name="Knights A.J."/>
            <person name="Lad H."/>
            <person name="Laird G."/>
            <person name="Lawlor S."/>
            <person name="Leongamornlert D.A."/>
            <person name="Lloyd D.M."/>
            <person name="Loveland J."/>
            <person name="Lovell J."/>
            <person name="Lush M.J."/>
            <person name="Lyne R."/>
            <person name="Martin S."/>
            <person name="Mashreghi-Mohammadi M."/>
            <person name="Matthews L."/>
            <person name="Matthews N.S.W."/>
            <person name="McLaren S."/>
            <person name="Milne S."/>
            <person name="Mistry S."/>
            <person name="Moore M.J.F."/>
            <person name="Nickerson T."/>
            <person name="O'Dell C.N."/>
            <person name="Oliver K."/>
            <person name="Palmeiri A."/>
            <person name="Palmer S.A."/>
            <person name="Parker A."/>
            <person name="Patel D."/>
            <person name="Pearce A.V."/>
            <person name="Peck A.I."/>
            <person name="Pelan S."/>
            <person name="Phelps K."/>
            <person name="Phillimore B.J."/>
            <person name="Plumb R."/>
            <person name="Rajan J."/>
            <person name="Raymond C."/>
            <person name="Rouse G."/>
            <person name="Saenphimmachak C."/>
            <person name="Sehra H.K."/>
            <person name="Sheridan E."/>
            <person name="Shownkeen R."/>
            <person name="Sims S."/>
            <person name="Skuce C.D."/>
            <person name="Smith M."/>
            <person name="Steward C."/>
            <person name="Subramanian S."/>
            <person name="Sycamore N."/>
            <person name="Tracey A."/>
            <person name="Tromans A."/>
            <person name="Van Helmond Z."/>
            <person name="Wall M."/>
            <person name="Wallis J.M."/>
            <person name="White S."/>
            <person name="Whitehead S.L."/>
            <person name="Wilkinson J.E."/>
            <person name="Willey D.L."/>
            <person name="Williams H."/>
            <person name="Wilming L."/>
            <person name="Wray P.W."/>
            <person name="Wu Z."/>
            <person name="Coulson A."/>
            <person name="Vaudin M."/>
            <person name="Sulston J.E."/>
            <person name="Durbin R.M."/>
            <person name="Hubbard T."/>
            <person name="Wooster R."/>
            <person name="Dunham I."/>
            <person name="Carter N.P."/>
            <person name="McVean G."/>
            <person name="Ross M.T."/>
            <person name="Harrow J."/>
            <person name="Olson M.V."/>
            <person name="Beck S."/>
            <person name="Rogers J."/>
            <person name="Bentley D.R."/>
        </authorList>
    </citation>
    <scope>NUCLEOTIDE SEQUENCE [LARGE SCALE GENOMIC DNA]</scope>
</reference>
<reference key="4">
    <citation type="submission" date="2005-09" db="EMBL/GenBank/DDBJ databases">
        <authorList>
            <person name="Mural R.J."/>
            <person name="Istrail S."/>
            <person name="Sutton G.G."/>
            <person name="Florea L."/>
            <person name="Halpern A.L."/>
            <person name="Mobarry C.M."/>
            <person name="Lippert R."/>
            <person name="Walenz B."/>
            <person name="Shatkay H."/>
            <person name="Dew I."/>
            <person name="Miller J.R."/>
            <person name="Flanigan M.J."/>
            <person name="Edwards N.J."/>
            <person name="Bolanos R."/>
            <person name="Fasulo D."/>
            <person name="Halldorsson B.V."/>
            <person name="Hannenhalli S."/>
            <person name="Turner R."/>
            <person name="Yooseph S."/>
            <person name="Lu F."/>
            <person name="Nusskern D.R."/>
            <person name="Shue B.C."/>
            <person name="Zheng X.H."/>
            <person name="Zhong F."/>
            <person name="Delcher A.L."/>
            <person name="Huson D.H."/>
            <person name="Kravitz S.A."/>
            <person name="Mouchard L."/>
            <person name="Reinert K."/>
            <person name="Remington K.A."/>
            <person name="Clark A.G."/>
            <person name="Waterman M.S."/>
            <person name="Eichler E.E."/>
            <person name="Adams M.D."/>
            <person name="Hunkapiller M.W."/>
            <person name="Myers E.W."/>
            <person name="Venter J.C."/>
        </authorList>
    </citation>
    <scope>NUCLEOTIDE SEQUENCE [LARGE SCALE GENOMIC DNA]</scope>
</reference>
<reference key="5">
    <citation type="journal article" date="2004" name="Genome Res.">
        <title>The status, quality, and expansion of the NIH full-length cDNA project: the Mammalian Gene Collection (MGC).</title>
        <authorList>
            <consortium name="The MGC Project Team"/>
        </authorList>
    </citation>
    <scope>NUCLEOTIDE SEQUENCE [LARGE SCALE MRNA]</scope>
    <source>
        <tissue>Testis</tissue>
    </source>
</reference>
<reference key="6">
    <citation type="submission" date="2001-07" db="EMBL/GenBank/DDBJ databases">
        <title>SOCS box proteins.</title>
        <authorList>
            <person name="Kile B.T."/>
            <person name="Nicola N.A."/>
        </authorList>
    </citation>
    <scope>NUCLEOTIDE SEQUENCE [MRNA] OF 1-231</scope>
</reference>
<keyword id="KW-0040">ANK repeat</keyword>
<keyword id="KW-1267">Proteomics identification</keyword>
<keyword id="KW-1185">Reference proteome</keyword>
<keyword id="KW-0833">Ubl conjugation pathway</keyword>
<comment type="function">
    <text evidence="1">May be a substrate-recognition component of a SCF-like ECS (Elongin-Cullin-SOCS-box protein) E3 ubiquitin-protein ligase complex which mediates the ubiquitination and subsequent proteasomal degradation of target proteins.</text>
</comment>
<comment type="pathway">
    <text>Protein modification; protein ubiquitination.</text>
</comment>
<comment type="tissue specificity">
    <text evidence="3">Specifically expressed in testis. Not detected in other tissues tested.</text>
</comment>
<comment type="domain">
    <text evidence="1">The SOCS box domain mediates the interaction with the Elongin BC complex, an adapter module in different E3 ubiquitin-protein ligase complexes.</text>
</comment>
<comment type="similarity">
    <text evidence="4">Belongs to the ankyrin SOCS box (ASB) family.</text>
</comment>
<sequence>MSKSTKLCGKTSCPRSNIFCNLLDKIVKRPSLQFLGQWGYHCYEPRIYRSLAKILRYVDLDGFDALLTDYIAFVEKSGYRFEVSFNLDFTEICVNTILYWVFARKGNPDFVELLLKKTKDYVQDRSCNLALIWRTFTPVYCPSPLSGITPLFYVAQTRQSNIFKILLQYGILEREKNPINIVLTIVLYPSRVRVMVDRELADIHEDAKTCLVLCSRVLSVISVKEIKTQLSLGRHPIISNWFDYIPSTRYKDPCELLHLCRLTIRNQLLTNNMLPDGIFSLLIPARLQNYLNLEI</sequence>
<protein>
    <recommendedName>
        <fullName>Ankyrin repeat and SOCS box protein 17</fullName>
        <shortName>ASB-17</shortName>
    </recommendedName>
</protein>
<name>ASB17_HUMAN</name>
<accession>Q8WXJ9</accession>
<accession>B1APB8</accession>
<accession>Q8N0X5</accession>
<gene>
    <name type="primary">ASB17</name>
</gene>